<comment type="function">
    <text evidence="3">Catalyzes the transfer of the formyl group from N-formylglutamate to tetrahydrofolate (THF) to yield 5-formyltetrahydrofolate (5-CHO-THF) and glutamate (Glu). The triglutamate form of 5-CHO-THF (5-CHO-THF-Glu3) can also be used as substrate. It can also catalyze the transfer of the formimino group from N-formiminoglutamate to tetrahydrofolate (THF) to yield 5-formiminotetrahydrofolate (5-NH=CH-THF) and glutamate (Glu). It can replace YgfA to catalyze the irreversible ATP-dependent transformation of 5-CHO-THF to form 5,10-methenyltetrahydrofolate (5,10-CH=THF).</text>
</comment>
<comment type="catalytic activity">
    <reaction evidence="3">
        <text>(6S)-5-formyl-5,6,7,8-tetrahydrofolate + L-glutamate = N-formyl-L-glutamate + (6S)-5,6,7,8-tetrahydrofolate + H(+)</text>
        <dbReference type="Rhea" id="RHEA:23240"/>
        <dbReference type="ChEBI" id="CHEBI:15378"/>
        <dbReference type="ChEBI" id="CHEBI:17684"/>
        <dbReference type="ChEBI" id="CHEBI:29985"/>
        <dbReference type="ChEBI" id="CHEBI:57453"/>
        <dbReference type="ChEBI" id="CHEBI:57457"/>
        <dbReference type="EC" id="2.1.2.5"/>
    </reaction>
</comment>
<comment type="catalytic activity">
    <reaction evidence="3">
        <text>5-formimidoyltetrahydrofolate + L-glutamate = N-formimidoyl-L-glutamate + (6S)-5,6,7,8-tetrahydrofolate</text>
        <dbReference type="Rhea" id="RHEA:15097"/>
        <dbReference type="ChEBI" id="CHEBI:29985"/>
        <dbReference type="ChEBI" id="CHEBI:57453"/>
        <dbReference type="ChEBI" id="CHEBI:57456"/>
        <dbReference type="ChEBI" id="CHEBI:58928"/>
        <dbReference type="EC" id="2.1.2.5"/>
    </reaction>
</comment>
<comment type="catalytic activity">
    <reaction evidence="3">
        <text>(6S)-5-formyl-5,6,7,8-tetrahydrofolate + ATP = (6R)-5,10-methenyltetrahydrofolate + ADP + phosphate</text>
        <dbReference type="Rhea" id="RHEA:10488"/>
        <dbReference type="ChEBI" id="CHEBI:30616"/>
        <dbReference type="ChEBI" id="CHEBI:43474"/>
        <dbReference type="ChEBI" id="CHEBI:57455"/>
        <dbReference type="ChEBI" id="CHEBI:57457"/>
        <dbReference type="ChEBI" id="CHEBI:456216"/>
        <dbReference type="EC" id="6.3.3.2"/>
    </reaction>
</comment>
<comment type="biophysicochemical properties">
    <kinetics>
        <KM evidence="3">3.7 uM for 5-CHO-THF (at pH 7.3 and 30 degrees Celsius)</KM>
        <KM evidence="3">3.8 uM for 5-CHO-THF-Glu3 (at pH 7.3 and 30 degrees Celsius)</KM>
        <KM evidence="3">113 uM for Glu (at pH 7.3 and 30 degrees Celsius)</KM>
        <text>kcat is 0.27 sec(-1) for formyltransferase with 5-CHO-THF or 5-CHO-THF-Glu3 as substrates (at pH 7.3 and 30 degrees Celsius).</text>
    </kinetics>
</comment>
<comment type="pathway">
    <text>Amino-acid degradation; L-histidine degradation into L-glutamate; L-glutamate from N-formimidoyl-L-glutamate (transferase route): step 1/1.</text>
</comment>
<comment type="pathway">
    <text>One-carbon metabolism; tetrahydrofolate interconversion.</text>
</comment>
<comment type="subcellular location">
    <subcellularLocation>
        <location evidence="1">Cytoplasm</location>
    </subcellularLocation>
</comment>
<comment type="similarity">
    <text evidence="4">Belongs to the formiminotransferase family.</text>
</comment>
<accession>Q9HI69</accession>
<organism>
    <name type="scientific">Thermoplasma acidophilum (strain ATCC 25905 / DSM 1728 / JCM 9062 / NBRC 15155 / AMRC-C165)</name>
    <dbReference type="NCBI Taxonomy" id="273075"/>
    <lineage>
        <taxon>Archaea</taxon>
        <taxon>Methanobacteriati</taxon>
        <taxon>Thermoplasmatota</taxon>
        <taxon>Thermoplasmata</taxon>
        <taxon>Thermoplasmatales</taxon>
        <taxon>Thermoplasmataceae</taxon>
        <taxon>Thermoplasma</taxon>
    </lineage>
</organism>
<protein>
    <recommendedName>
        <fullName>Glutamate formimidoyltransferase</fullName>
        <ecNumber>2.1.2.5</ecNumber>
    </recommendedName>
    <alternativeName>
        <fullName>5-formyltetrahydrofolate cyclo-ligase</fullName>
        <ecNumber>6.3.3.2</ecNumber>
    </alternativeName>
    <alternativeName>
        <fullName>Glutamate formiminotransferase</fullName>
    </alternativeName>
    <alternativeName>
        <fullName>Glutamate formyltransferase</fullName>
    </alternativeName>
</protein>
<feature type="chain" id="PRO_0000430018" description="Glutamate formimidoyltransferase">
    <location>
        <begin position="1"/>
        <end position="303"/>
    </location>
</feature>
<feature type="active site" description="For formimidoyltransferase activity" evidence="1">
    <location>
        <position position="81"/>
    </location>
</feature>
<feature type="binding site" evidence="2">
    <location>
        <begin position="164"/>
        <end position="172"/>
    </location>
    <ligand>
        <name>folate</name>
        <dbReference type="ChEBI" id="CHEBI:62501"/>
    </ligand>
</feature>
<evidence type="ECO:0000250" key="1"/>
<evidence type="ECO:0000255" key="2"/>
<evidence type="ECO:0000269" key="3">
    <source>
    </source>
</evidence>
<evidence type="ECO:0000305" key="4"/>
<keyword id="KW-0963">Cytoplasm</keyword>
<keyword id="KW-0290">Folate-binding</keyword>
<keyword id="KW-0369">Histidine metabolism</keyword>
<keyword id="KW-0436">Ligase</keyword>
<keyword id="KW-1185">Reference proteome</keyword>
<keyword id="KW-0808">Transferase</keyword>
<gene>
    <name type="ordered locus">Ta1476</name>
</gene>
<sequence length="303" mass="33792">MSLVECVPNFSEGRDRDRVNRIRDAIASVDTVKILDVEMDPNHNRSVITFVCDSSKAVDAAFAGIKAAAEIIDMDAHRGEHPRFGAADVIPFVPLQDTKMETCVRLARDLGKRVGEELGIPVYLYAEAAQRPDRSDLAAIRNKNFQYEQLKEAIKEEKWKPDFGPSVVGKAGASIIGARDFLIAYNVNLNTSNMEIGKKIASAIRAKDGGLTFVKSLAFFLKDKNMVQISMNLTNYRKTPIYRAYELVRLEAARYGVLPVESEIVGLVPEQALIDVAKYYLQLNGFDEGNILERKMEKAANME</sequence>
<reference key="1">
    <citation type="journal article" date="2000" name="Nature">
        <title>The genome sequence of the thermoacidophilic scavenger Thermoplasma acidophilum.</title>
        <authorList>
            <person name="Ruepp A."/>
            <person name="Graml W."/>
            <person name="Santos-Martinez M.-L."/>
            <person name="Koretke K.K."/>
            <person name="Volker C."/>
            <person name="Mewes H.-W."/>
            <person name="Frishman D."/>
            <person name="Stocker S."/>
            <person name="Lupas A.N."/>
            <person name="Baumeister W."/>
        </authorList>
    </citation>
    <scope>NUCLEOTIDE SEQUENCE [LARGE SCALE GENOMIC DNA]</scope>
    <source>
        <strain>ATCC 25905 / DSM 1728 / JCM 9062 / NBRC 15155 / AMRC-C165</strain>
    </source>
</reference>
<reference key="2">
    <citation type="journal article" date="2010" name="J. Biol. Chem.">
        <title>Moonlighting glutamate formiminotransferases can functionally replace 5-formyltetrahydrofolate cycloligase.</title>
        <authorList>
            <person name="Jeanguenin L."/>
            <person name="Lara-Nunez A."/>
            <person name="Pribat A."/>
            <person name="Mageroy M.H."/>
            <person name="Gregory J.F. III"/>
            <person name="Rice K.C."/>
            <person name="de Crecy-Lagard V."/>
            <person name="Hanson A.D."/>
        </authorList>
    </citation>
    <scope>FUNCTION</scope>
    <scope>CATALYTIC ACTIVITY</scope>
    <scope>BIOPHYSICOCHEMICAL PROPERTIES</scope>
    <scope>SUBSTRATE SPECIFICITY</scope>
</reference>
<name>GLFT_THEAC</name>
<proteinExistence type="evidence at protein level"/>
<dbReference type="EC" id="2.1.2.5"/>
<dbReference type="EC" id="6.3.3.2"/>
<dbReference type="EMBL" id="AL445067">
    <property type="protein sequence ID" value="CAC12594.1"/>
    <property type="molecule type" value="Genomic_DNA"/>
</dbReference>
<dbReference type="RefSeq" id="WP_010901876.1">
    <property type="nucleotide sequence ID" value="NC_002578.1"/>
</dbReference>
<dbReference type="SMR" id="Q9HI69"/>
<dbReference type="STRING" id="273075.gene:9572705"/>
<dbReference type="MoonProt" id="Q9HI69"/>
<dbReference type="PaxDb" id="273075-Ta1476"/>
<dbReference type="EnsemblBacteria" id="CAC12594">
    <property type="protein sequence ID" value="CAC12594"/>
    <property type="gene ID" value="CAC12594"/>
</dbReference>
<dbReference type="KEGG" id="tac:Ta1476"/>
<dbReference type="eggNOG" id="arCOG05394">
    <property type="taxonomic scope" value="Archaea"/>
</dbReference>
<dbReference type="HOGENOM" id="CLU_040037_0_0_2"/>
<dbReference type="InParanoid" id="Q9HI69"/>
<dbReference type="OrthoDB" id="56032at2157"/>
<dbReference type="UniPathway" id="UPA00193"/>
<dbReference type="UniPathway" id="UPA00379">
    <property type="reaction ID" value="UER00555"/>
</dbReference>
<dbReference type="Proteomes" id="UP000001024">
    <property type="component" value="Chromosome"/>
</dbReference>
<dbReference type="GO" id="GO:0005737">
    <property type="term" value="C:cytoplasm"/>
    <property type="evidence" value="ECO:0007669"/>
    <property type="project" value="UniProtKB-SubCell"/>
</dbReference>
<dbReference type="GO" id="GO:0030272">
    <property type="term" value="F:5-formyltetrahydrofolate cyclo-ligase activity"/>
    <property type="evidence" value="ECO:0007669"/>
    <property type="project" value="UniProtKB-EC"/>
</dbReference>
<dbReference type="GO" id="GO:0005542">
    <property type="term" value="F:folic acid binding"/>
    <property type="evidence" value="ECO:0007669"/>
    <property type="project" value="UniProtKB-KW"/>
</dbReference>
<dbReference type="GO" id="GO:0030409">
    <property type="term" value="F:glutamate formimidoyltransferase activity"/>
    <property type="evidence" value="ECO:0007669"/>
    <property type="project" value="UniProtKB-EC"/>
</dbReference>
<dbReference type="GO" id="GO:0019556">
    <property type="term" value="P:L-histidine catabolic process to glutamate and formamide"/>
    <property type="evidence" value="ECO:0007669"/>
    <property type="project" value="UniProtKB-UniPathway"/>
</dbReference>
<dbReference type="GO" id="GO:0019557">
    <property type="term" value="P:L-histidine catabolic process to glutamate and formate"/>
    <property type="evidence" value="ECO:0007669"/>
    <property type="project" value="UniProtKB-UniPathway"/>
</dbReference>
<dbReference type="GO" id="GO:0035999">
    <property type="term" value="P:tetrahydrofolate interconversion"/>
    <property type="evidence" value="ECO:0007669"/>
    <property type="project" value="UniProtKB-UniPathway"/>
</dbReference>
<dbReference type="Gene3D" id="3.30.70.670">
    <property type="entry name" value="Formiminotransferase, C-terminal subdomain"/>
    <property type="match status" value="1"/>
</dbReference>
<dbReference type="Gene3D" id="3.30.990.10">
    <property type="entry name" value="Formiminotransferase, N-terminal subdomain"/>
    <property type="match status" value="1"/>
</dbReference>
<dbReference type="InterPro" id="IPR013802">
    <property type="entry name" value="Formiminotransferase_C"/>
</dbReference>
<dbReference type="InterPro" id="IPR037070">
    <property type="entry name" value="Formiminotransferase_C_sf"/>
</dbReference>
<dbReference type="InterPro" id="IPR004227">
    <property type="entry name" value="Formiminotransferase_cat"/>
</dbReference>
<dbReference type="InterPro" id="IPR012886">
    <property type="entry name" value="Formiminotransferase_N"/>
</dbReference>
<dbReference type="InterPro" id="IPR037064">
    <property type="entry name" value="Formiminotransferase_N_sf"/>
</dbReference>
<dbReference type="InterPro" id="IPR022384">
    <property type="entry name" value="FormiminoTrfase_cat_dom_sf"/>
</dbReference>
<dbReference type="InterPro" id="IPR051623">
    <property type="entry name" value="FTCD"/>
</dbReference>
<dbReference type="NCBIfam" id="TIGR02024">
    <property type="entry name" value="FtcD"/>
    <property type="match status" value="1"/>
</dbReference>
<dbReference type="PANTHER" id="PTHR12234">
    <property type="entry name" value="FORMIMINOTRANSFERASE-CYCLODEAMINASE"/>
    <property type="match status" value="1"/>
</dbReference>
<dbReference type="PANTHER" id="PTHR12234:SF8">
    <property type="entry name" value="FORMIMINOTRANSFERASE-CYCLODEAMINASE"/>
    <property type="match status" value="1"/>
</dbReference>
<dbReference type="Pfam" id="PF02971">
    <property type="entry name" value="FTCD"/>
    <property type="match status" value="1"/>
</dbReference>
<dbReference type="Pfam" id="PF07837">
    <property type="entry name" value="FTCD_N"/>
    <property type="match status" value="1"/>
</dbReference>
<dbReference type="SMART" id="SM01221">
    <property type="entry name" value="FTCD"/>
    <property type="match status" value="1"/>
</dbReference>
<dbReference type="SMART" id="SM01222">
    <property type="entry name" value="FTCD_N"/>
    <property type="match status" value="1"/>
</dbReference>
<dbReference type="SUPFAM" id="SSF55116">
    <property type="entry name" value="Formiminotransferase domain of formiminotransferase-cyclodeaminase"/>
    <property type="match status" value="2"/>
</dbReference>